<keyword id="KW-0143">Chaperone</keyword>
<keyword id="KW-0963">Cytoplasm</keyword>
<keyword id="KW-0346">Stress response</keyword>
<sequence>MRNFDLSPLYRSAIGFDRLFNLLENNQSQSNGGYPPYNVELVDENHYRIAIAVAGFAESELEITAQDNLLVVKGAHADEQKERTYLYQGIAERNFERKFQLAENIHVRGANLVNGLLYIELERVIPEANKPRRIEIN</sequence>
<accession>Q8XGW7</accession>
<accession>Q7AM03</accession>
<name>IBPA_SALTI</name>
<evidence type="ECO:0000255" key="1">
    <source>
        <dbReference type="HAMAP-Rule" id="MF_02000"/>
    </source>
</evidence>
<evidence type="ECO:0000255" key="2">
    <source>
        <dbReference type="PROSITE-ProRule" id="PRU00285"/>
    </source>
</evidence>
<dbReference type="EMBL" id="AE014613">
    <property type="protein sequence ID" value="AAO71204.1"/>
    <property type="molecule type" value="Genomic_DNA"/>
</dbReference>
<dbReference type="EMBL" id="AL513382">
    <property type="protein sequence ID" value="CAD03185.1"/>
    <property type="molecule type" value="Genomic_DNA"/>
</dbReference>
<dbReference type="RefSeq" id="NP_458130.1">
    <property type="nucleotide sequence ID" value="NC_003198.1"/>
</dbReference>
<dbReference type="RefSeq" id="WP_001532742.1">
    <property type="nucleotide sequence ID" value="NZ_WSUR01000001.1"/>
</dbReference>
<dbReference type="SMR" id="Q8XGW7"/>
<dbReference type="STRING" id="220341.gene:17587828"/>
<dbReference type="GeneID" id="84234411"/>
<dbReference type="KEGG" id="stt:t3709"/>
<dbReference type="KEGG" id="sty:STY3969"/>
<dbReference type="PATRIC" id="fig|220341.7.peg.4056"/>
<dbReference type="eggNOG" id="COG0071">
    <property type="taxonomic scope" value="Bacteria"/>
</dbReference>
<dbReference type="HOGENOM" id="CLU_046737_4_2_6"/>
<dbReference type="OMA" id="TAHDNML"/>
<dbReference type="OrthoDB" id="6871152at2"/>
<dbReference type="Proteomes" id="UP000000541">
    <property type="component" value="Chromosome"/>
</dbReference>
<dbReference type="Proteomes" id="UP000002670">
    <property type="component" value="Chromosome"/>
</dbReference>
<dbReference type="GO" id="GO:0005737">
    <property type="term" value="C:cytoplasm"/>
    <property type="evidence" value="ECO:0007669"/>
    <property type="project" value="UniProtKB-SubCell"/>
</dbReference>
<dbReference type="GO" id="GO:0050821">
    <property type="term" value="P:protein stabilization"/>
    <property type="evidence" value="ECO:0007669"/>
    <property type="project" value="UniProtKB-UniRule"/>
</dbReference>
<dbReference type="CDD" id="cd06470">
    <property type="entry name" value="ACD_IbpA-B_like"/>
    <property type="match status" value="1"/>
</dbReference>
<dbReference type="FunFam" id="2.60.40.790:FF:000002">
    <property type="entry name" value="Small heat shock protein IbpA"/>
    <property type="match status" value="1"/>
</dbReference>
<dbReference type="Gene3D" id="2.60.40.790">
    <property type="match status" value="1"/>
</dbReference>
<dbReference type="HAMAP" id="MF_02000">
    <property type="entry name" value="HSP20_IbpA"/>
    <property type="match status" value="1"/>
</dbReference>
<dbReference type="InterPro" id="IPR002068">
    <property type="entry name" value="A-crystallin/Hsp20_dom"/>
</dbReference>
<dbReference type="InterPro" id="IPR037913">
    <property type="entry name" value="ACD_IbpA/B"/>
</dbReference>
<dbReference type="InterPro" id="IPR008978">
    <property type="entry name" value="HSP20-like_chaperone"/>
</dbReference>
<dbReference type="InterPro" id="IPR023728">
    <property type="entry name" value="HSP20_IbpA"/>
</dbReference>
<dbReference type="NCBIfam" id="NF008013">
    <property type="entry name" value="PRK10743.1"/>
    <property type="match status" value="1"/>
</dbReference>
<dbReference type="PANTHER" id="PTHR47062">
    <property type="match status" value="1"/>
</dbReference>
<dbReference type="PANTHER" id="PTHR47062:SF1">
    <property type="entry name" value="SMALL HEAT SHOCK PROTEIN IBPA"/>
    <property type="match status" value="1"/>
</dbReference>
<dbReference type="Pfam" id="PF00011">
    <property type="entry name" value="HSP20"/>
    <property type="match status" value="1"/>
</dbReference>
<dbReference type="SUPFAM" id="SSF49764">
    <property type="entry name" value="HSP20-like chaperones"/>
    <property type="match status" value="1"/>
</dbReference>
<dbReference type="PROSITE" id="PS01031">
    <property type="entry name" value="SHSP"/>
    <property type="match status" value="1"/>
</dbReference>
<comment type="function">
    <text evidence="1">Associates with aggregated proteins, together with IbpB, to stabilize and protect them from irreversible denaturation and extensive proteolysis during heat shock and oxidative stress. Aggregated proteins bound to the IbpAB complex are more efficiently refolded and reactivated by the ATP-dependent chaperone systems ClpB and DnaK/DnaJ/GrpE. Its activity is ATP-independent.</text>
</comment>
<comment type="subunit">
    <text evidence="1">Monomer. Forms homomultimers of about 100-150 subunits at optimal growth temperatures. Conformation changes to monomers at high temperatures or high ionic concentrations.</text>
</comment>
<comment type="subcellular location">
    <subcellularLocation>
        <location evidence="1">Cytoplasm</location>
    </subcellularLocation>
</comment>
<comment type="similarity">
    <text evidence="1 2">Belongs to the small heat shock protein (HSP20) family.</text>
</comment>
<reference key="1">
    <citation type="journal article" date="2003" name="J. Bacteriol.">
        <title>Comparative genomics of Salmonella enterica serovar Typhi strains Ty2 and CT18.</title>
        <authorList>
            <person name="Deng W."/>
            <person name="Liou S.-R."/>
            <person name="Plunkett G. III"/>
            <person name="Mayhew G.F."/>
            <person name="Rose D.J."/>
            <person name="Burland V."/>
            <person name="Kodoyianni V."/>
            <person name="Schwartz D.C."/>
            <person name="Blattner F.R."/>
        </authorList>
    </citation>
    <scope>NUCLEOTIDE SEQUENCE [LARGE SCALE GENOMIC DNA]</scope>
    <source>
        <strain>ATCC 700931 / Ty2</strain>
    </source>
</reference>
<reference key="2">
    <citation type="journal article" date="2001" name="Nature">
        <title>Complete genome sequence of a multiple drug resistant Salmonella enterica serovar Typhi CT18.</title>
        <authorList>
            <person name="Parkhill J."/>
            <person name="Dougan G."/>
            <person name="James K.D."/>
            <person name="Thomson N.R."/>
            <person name="Pickard D."/>
            <person name="Wain J."/>
            <person name="Churcher C.M."/>
            <person name="Mungall K.L."/>
            <person name="Bentley S.D."/>
            <person name="Holden M.T.G."/>
            <person name="Sebaihia M."/>
            <person name="Baker S."/>
            <person name="Basham D."/>
            <person name="Brooks K."/>
            <person name="Chillingworth T."/>
            <person name="Connerton P."/>
            <person name="Cronin A."/>
            <person name="Davis P."/>
            <person name="Davies R.M."/>
            <person name="Dowd L."/>
            <person name="White N."/>
            <person name="Farrar J."/>
            <person name="Feltwell T."/>
            <person name="Hamlin N."/>
            <person name="Haque A."/>
            <person name="Hien T.T."/>
            <person name="Holroyd S."/>
            <person name="Jagels K."/>
            <person name="Krogh A."/>
            <person name="Larsen T.S."/>
            <person name="Leather S."/>
            <person name="Moule S."/>
            <person name="O'Gaora P."/>
            <person name="Parry C."/>
            <person name="Quail M.A."/>
            <person name="Rutherford K.M."/>
            <person name="Simmonds M."/>
            <person name="Skelton J."/>
            <person name="Stevens K."/>
            <person name="Whitehead S."/>
            <person name="Barrell B.G."/>
        </authorList>
    </citation>
    <scope>NUCLEOTIDE SEQUENCE [LARGE SCALE GENOMIC DNA]</scope>
    <source>
        <strain>CT18</strain>
    </source>
</reference>
<organism>
    <name type="scientific">Salmonella typhi</name>
    <dbReference type="NCBI Taxonomy" id="90370"/>
    <lineage>
        <taxon>Bacteria</taxon>
        <taxon>Pseudomonadati</taxon>
        <taxon>Pseudomonadota</taxon>
        <taxon>Gammaproteobacteria</taxon>
        <taxon>Enterobacterales</taxon>
        <taxon>Enterobacteriaceae</taxon>
        <taxon>Salmonella</taxon>
    </lineage>
</organism>
<gene>
    <name evidence="1" type="primary">ibpA</name>
    <name type="ordered locus">STY3969</name>
    <name type="ordered locus">t3709</name>
</gene>
<proteinExistence type="inferred from homology"/>
<protein>
    <recommendedName>
        <fullName evidence="1">Small heat shock protein IbpA</fullName>
    </recommendedName>
    <alternativeName>
        <fullName evidence="1">16 kDa heat shock protein A</fullName>
    </alternativeName>
</protein>
<feature type="chain" id="PRO_0000126023" description="Small heat shock protein IbpA">
    <location>
        <begin position="1"/>
        <end position="137"/>
    </location>
</feature>
<feature type="domain" description="sHSP" evidence="2">
    <location>
        <begin position="28"/>
        <end position="137"/>
    </location>
</feature>